<keyword id="KW-0201">Cytochrome c-type biogenesis</keyword>
<keyword id="KW-1015">Disulfide bond</keyword>
<keyword id="KW-0574">Periplasm</keyword>
<keyword id="KW-0676">Redox-active center</keyword>
<keyword id="KW-1185">Reference proteome</keyword>
<keyword id="KW-0732">Signal</keyword>
<accession>P52236</accession>
<accession>A1B1W7</accession>
<evidence type="ECO:0000255" key="1"/>
<evidence type="ECO:0000255" key="2">
    <source>
        <dbReference type="PROSITE-ProRule" id="PRU00691"/>
    </source>
</evidence>
<evidence type="ECO:0000305" key="3"/>
<dbReference type="EMBL" id="Z71971">
    <property type="protein sequence ID" value="CAA96497.1"/>
    <property type="molecule type" value="Genomic_DNA"/>
</dbReference>
<dbReference type="EMBL" id="CP000489">
    <property type="protein sequence ID" value="ABL69511.1"/>
    <property type="status" value="ALT_INIT"/>
    <property type="molecule type" value="Genomic_DNA"/>
</dbReference>
<dbReference type="RefSeq" id="WP_011747729.1">
    <property type="nucleotide sequence ID" value="NC_008686.1"/>
</dbReference>
<dbReference type="SMR" id="P52236"/>
<dbReference type="STRING" id="318586.Pden_1410"/>
<dbReference type="EnsemblBacteria" id="ABL69511">
    <property type="protein sequence ID" value="ABL69511"/>
    <property type="gene ID" value="Pden_1410"/>
</dbReference>
<dbReference type="KEGG" id="pde:Pden_1410"/>
<dbReference type="eggNOG" id="COG0526">
    <property type="taxonomic scope" value="Bacteria"/>
</dbReference>
<dbReference type="HOGENOM" id="CLU_042529_19_0_5"/>
<dbReference type="OrthoDB" id="9799347at2"/>
<dbReference type="Proteomes" id="UP000000361">
    <property type="component" value="Chromosome 1"/>
</dbReference>
<dbReference type="GO" id="GO:0030288">
    <property type="term" value="C:outer membrane-bounded periplasmic space"/>
    <property type="evidence" value="ECO:0007669"/>
    <property type="project" value="InterPro"/>
</dbReference>
<dbReference type="GO" id="GO:0015036">
    <property type="term" value="F:disulfide oxidoreductase activity"/>
    <property type="evidence" value="ECO:0007669"/>
    <property type="project" value="InterPro"/>
</dbReference>
<dbReference type="GO" id="GO:0017004">
    <property type="term" value="P:cytochrome complex assembly"/>
    <property type="evidence" value="ECO:0007669"/>
    <property type="project" value="UniProtKB-KW"/>
</dbReference>
<dbReference type="CDD" id="cd03010">
    <property type="entry name" value="TlpA_like_DsbE"/>
    <property type="match status" value="1"/>
</dbReference>
<dbReference type="Gene3D" id="3.40.30.10">
    <property type="entry name" value="Glutaredoxin"/>
    <property type="match status" value="1"/>
</dbReference>
<dbReference type="InterPro" id="IPR004799">
    <property type="entry name" value="Periplasmic_diS_OxRdtase_DsbE"/>
</dbReference>
<dbReference type="InterPro" id="IPR013740">
    <property type="entry name" value="Redoxin"/>
</dbReference>
<dbReference type="InterPro" id="IPR036249">
    <property type="entry name" value="Thioredoxin-like_sf"/>
</dbReference>
<dbReference type="InterPro" id="IPR017937">
    <property type="entry name" value="Thioredoxin_CS"/>
</dbReference>
<dbReference type="InterPro" id="IPR013766">
    <property type="entry name" value="Thioredoxin_domain"/>
</dbReference>
<dbReference type="InterPro" id="IPR050553">
    <property type="entry name" value="Thioredoxin_ResA/DsbE_sf"/>
</dbReference>
<dbReference type="NCBIfam" id="TIGR00385">
    <property type="entry name" value="dsbE"/>
    <property type="match status" value="1"/>
</dbReference>
<dbReference type="PANTHER" id="PTHR42852">
    <property type="entry name" value="THIOL:DISULFIDE INTERCHANGE PROTEIN DSBE"/>
    <property type="match status" value="1"/>
</dbReference>
<dbReference type="PANTHER" id="PTHR42852:SF6">
    <property type="entry name" value="THIOL:DISULFIDE INTERCHANGE PROTEIN DSBE"/>
    <property type="match status" value="1"/>
</dbReference>
<dbReference type="Pfam" id="PF08534">
    <property type="entry name" value="Redoxin"/>
    <property type="match status" value="1"/>
</dbReference>
<dbReference type="SUPFAM" id="SSF52833">
    <property type="entry name" value="Thioredoxin-like"/>
    <property type="match status" value="1"/>
</dbReference>
<dbReference type="PROSITE" id="PS00194">
    <property type="entry name" value="THIOREDOXIN_1"/>
    <property type="match status" value="1"/>
</dbReference>
<dbReference type="PROSITE" id="PS51352">
    <property type="entry name" value="THIOREDOXIN_2"/>
    <property type="match status" value="1"/>
</dbReference>
<comment type="function">
    <text>Required for disulfide bond formation in some periplasmic proteins. Also acts as a disulfide oxidoreductase in cytochromes c biogenesis. The cysteines of apocytochromes c must be in the reduced state for covalent linkage between the two moieties to occur.</text>
</comment>
<comment type="subcellular location">
    <subcellularLocation>
        <location>Periplasm</location>
    </subcellularLocation>
</comment>
<comment type="similarity">
    <text evidence="3">Belongs to the thioredoxin family. DsbE subfamily.</text>
</comment>
<comment type="sequence caution" evidence="3">
    <conflict type="erroneous initiation">
        <sequence resource="EMBL-CDS" id="ABL69511"/>
    </conflict>
</comment>
<protein>
    <recommendedName>
        <fullName>Thiol:disulfide interchange protein DsbE homolog</fullName>
    </recommendedName>
    <alternativeName>
        <fullName>Cytochrome c biogenesis protein CcmG</fullName>
    </alternativeName>
</protein>
<feature type="signal peptide" evidence="1">
    <location>
        <begin position="1"/>
        <end position="25"/>
    </location>
</feature>
<feature type="chain" id="PRO_0000034285" description="Thiol:disulfide interchange protein DsbE homolog">
    <location>
        <begin position="26"/>
        <end position="179"/>
    </location>
</feature>
<feature type="domain" description="Thioredoxin" evidence="2">
    <location>
        <begin position="37"/>
        <end position="174"/>
    </location>
</feature>
<feature type="disulfide bond" description="Redox-active" evidence="2">
    <location>
        <begin position="77"/>
        <end position="80"/>
    </location>
</feature>
<feature type="sequence conflict" description="In Ref. 1; CAA96497." evidence="3" ref="1">
    <original>RD</original>
    <variation>PN</variation>
    <location>
        <begin position="28"/>
        <end position="29"/>
    </location>
</feature>
<feature type="sequence conflict" description="In Ref. 1; CAA96497." evidence="3" ref="1">
    <original>ML</original>
    <variation>IV</variation>
    <location>
        <begin position="61"/>
        <end position="62"/>
    </location>
</feature>
<feature type="sequence conflict" description="In Ref. 1; CAA96497." evidence="3" ref="1">
    <original>ID</original>
    <variation>MH</variation>
    <location>
        <begin position="145"/>
        <end position="146"/>
    </location>
</feature>
<reference key="1">
    <citation type="journal article" date="1997" name="Mol. Microbiol.">
        <title>Paracoccus denitrificans CcmG is a periplasmic protein-disulphide oxidoreductase required for c- and aa3-type cytochrome biogenesis; evidence for a reductase role in vivo.</title>
        <authorList>
            <person name="Page M.D."/>
            <person name="Ferguson S.J."/>
        </authorList>
    </citation>
    <scope>NUCLEOTIDE SEQUENCE [GENOMIC DNA]</scope>
</reference>
<reference key="2">
    <citation type="submission" date="2006-12" db="EMBL/GenBank/DDBJ databases">
        <title>Complete sequence of chromosome 1 of Paracoccus denitrificans PD1222.</title>
        <authorList>
            <person name="Copeland A."/>
            <person name="Lucas S."/>
            <person name="Lapidus A."/>
            <person name="Barry K."/>
            <person name="Detter J.C."/>
            <person name="Glavina del Rio T."/>
            <person name="Hammon N."/>
            <person name="Israni S."/>
            <person name="Dalin E."/>
            <person name="Tice H."/>
            <person name="Pitluck S."/>
            <person name="Munk A.C."/>
            <person name="Brettin T."/>
            <person name="Bruce D."/>
            <person name="Han C."/>
            <person name="Tapia R."/>
            <person name="Gilna P."/>
            <person name="Schmutz J."/>
            <person name="Larimer F."/>
            <person name="Land M."/>
            <person name="Hauser L."/>
            <person name="Kyrpides N."/>
            <person name="Lykidis A."/>
            <person name="Spiro S."/>
            <person name="Richardson D.J."/>
            <person name="Moir J.W.B."/>
            <person name="Ferguson S.J."/>
            <person name="van Spanning R.J.M."/>
            <person name="Richardson P."/>
        </authorList>
    </citation>
    <scope>NUCLEOTIDE SEQUENCE [LARGE SCALE GENOMIC DNA]</scope>
    <source>
        <strain>Pd 1222</strain>
    </source>
</reference>
<proteinExistence type="inferred from homology"/>
<sequence length="179" mass="19361">MARFSPMMLLPVAIFAGFAGLSGWALLRDDPDALPSAMIGREAPSVGEATLPGKVQLTDEMLRQPGVKLVNFWASWCPPCRAEHPTLTELSARLPVYGVDLKDPEGAALGFLSEHGDPFHALAADPRGRVAIDWGVTAPPETFIIDGSGRILHRHAGPLVREDYTNRFLPELEKALAAE</sequence>
<organism>
    <name type="scientific">Paracoccus denitrificans (strain Pd 1222)</name>
    <dbReference type="NCBI Taxonomy" id="318586"/>
    <lineage>
        <taxon>Bacteria</taxon>
        <taxon>Pseudomonadati</taxon>
        <taxon>Pseudomonadota</taxon>
        <taxon>Alphaproteobacteria</taxon>
        <taxon>Rhodobacterales</taxon>
        <taxon>Paracoccaceae</taxon>
        <taxon>Paracoccus</taxon>
    </lineage>
</organism>
<gene>
    <name type="primary">ccmG</name>
    <name type="ordered locus">Pden_1410</name>
</gene>
<name>CCMG_PARDP</name>